<feature type="transit peptide" description="Chloroplast" evidence="2">
    <location>
        <begin position="1"/>
        <end position="78"/>
    </location>
</feature>
<feature type="chain" id="PRO_0000412809" description="Beta-carotene 3-hydroxylase, chloroplastic">
    <location>
        <begin position="79"/>
        <end position="320"/>
    </location>
</feature>
<feature type="transmembrane region" description="Helical" evidence="2">
    <location>
        <begin position="118"/>
        <end position="138"/>
    </location>
</feature>
<feature type="transmembrane region" description="Helical" evidence="2">
    <location>
        <begin position="152"/>
        <end position="172"/>
    </location>
</feature>
<feature type="transmembrane region" description="Helical" evidence="2">
    <location>
        <begin position="204"/>
        <end position="224"/>
    </location>
</feature>
<feature type="transmembrane region" description="Helical" evidence="2">
    <location>
        <begin position="228"/>
        <end position="248"/>
    </location>
</feature>
<feature type="domain" description="Fatty acid hydroxylase" evidence="2">
    <location>
        <begin position="165"/>
        <end position="292"/>
    </location>
</feature>
<feature type="short sequence motif" description="Histidine box-1">
    <location>
        <begin position="177"/>
        <end position="182"/>
    </location>
</feature>
<feature type="short sequence motif" description="Histidine box-2">
    <location>
        <begin position="189"/>
        <end position="193"/>
    </location>
</feature>
<feature type="short sequence motif" description="Histidine box-3">
    <location>
        <begin position="250"/>
        <end position="255"/>
    </location>
</feature>
<feature type="short sequence motif" description="Histidine box-4">
    <location>
        <begin position="276"/>
        <end position="280"/>
    </location>
</feature>
<feature type="sequence conflict" description="In Ref. 1; BAE92729." evidence="4" ref="1">
    <original>R</original>
    <variation>K</variation>
    <location>
        <position position="73"/>
    </location>
</feature>
<name>BCH_GENLU</name>
<sequence length="320" mass="35574">METQFLVSGRNSNIHCRIDSISSSSLTPKSSPVSTSTPTLVVFPPFKLVSKSLRTRSKPRLTVCFVLEEKELRGKLVVASDDDDGAGEVRKQREKEISASAEKLAQKLARKKSERFTYLVAAVMSSFGITSMAVLSVYYRFSWQMEGGEIPLSEMFGTFALSVGAAVGMEFWARWAHEALWHASLWHMHESHHKPREGPFELNDIFAIINAVPAIALLSYGFFHKGLIPGLCFGAGLGITVFGMAYMFVHDGLVHKRFPVGPIADVPYFRRVAAAHTLHHSDKFNGVPYGLFLGPKELEEVGGLQVLEMEINRRTKNNQS</sequence>
<accession>B3SGL0</accession>
<accession>Q1XIT1</accession>
<protein>
    <recommendedName>
        <fullName>Beta-carotene 3-hydroxylase, chloroplastic</fullName>
        <shortName>GenCHYB</shortName>
        <ecNumber evidence="1">1.14.15.24</ecNumber>
    </recommendedName>
</protein>
<comment type="function">
    <text evidence="1 5">Nonheme diiron monooxygenase involved in the biosynthesis of xanthophylls. Specific for beta-ring hydroxylations of beta-carotene. Uses ferredoxin as an electron donor.</text>
</comment>
<comment type="catalytic activity">
    <reaction evidence="1">
        <text>all-trans-beta-carotene + 4 reduced [2Fe-2S]-[ferredoxin] + 2 O2 + 4 H(+) = all-trans-zeaxanthin + 4 oxidized [2Fe-2S]-[ferredoxin] + 2 H2O</text>
        <dbReference type="Rhea" id="RHEA:30331"/>
        <dbReference type="Rhea" id="RHEA-COMP:10000"/>
        <dbReference type="Rhea" id="RHEA-COMP:10001"/>
        <dbReference type="ChEBI" id="CHEBI:15377"/>
        <dbReference type="ChEBI" id="CHEBI:15378"/>
        <dbReference type="ChEBI" id="CHEBI:15379"/>
        <dbReference type="ChEBI" id="CHEBI:17579"/>
        <dbReference type="ChEBI" id="CHEBI:27547"/>
        <dbReference type="ChEBI" id="CHEBI:33737"/>
        <dbReference type="ChEBI" id="CHEBI:33738"/>
        <dbReference type="EC" id="1.14.15.24"/>
    </reaction>
</comment>
<comment type="subcellular location">
    <subcellularLocation>
        <location evidence="4">Plastid</location>
        <location evidence="4">Chloroplast membrane</location>
        <topology evidence="4">Multi-pass membrane protein</topology>
    </subcellularLocation>
</comment>
<comment type="developmental stage">
    <text evidence="3">Up-regulated during flower development.</text>
</comment>
<comment type="domain">
    <text>The histidine box domains may contain the active site and/or be involved in iron binding.</text>
</comment>
<comment type="similarity">
    <text evidence="4">Belongs to the sterol desaturase family.</text>
</comment>
<organism>
    <name type="scientific">Gentiana lutea</name>
    <name type="common">Yellow gentian</name>
    <dbReference type="NCBI Taxonomy" id="38851"/>
    <lineage>
        <taxon>Eukaryota</taxon>
        <taxon>Viridiplantae</taxon>
        <taxon>Streptophyta</taxon>
        <taxon>Embryophyta</taxon>
        <taxon>Tracheophyta</taxon>
        <taxon>Spermatophyta</taxon>
        <taxon>Magnoliopsida</taxon>
        <taxon>eudicotyledons</taxon>
        <taxon>Gunneridae</taxon>
        <taxon>Pentapetalae</taxon>
        <taxon>asterids</taxon>
        <taxon>lamiids</taxon>
        <taxon>Gentianales</taxon>
        <taxon>Gentianaceae</taxon>
        <taxon>Gentianeae</taxon>
        <taxon>Gentianinae</taxon>
        <taxon>Gentiana</taxon>
    </lineage>
</organism>
<reference key="1">
    <citation type="journal article" date="2003" name="Biochim. Biophys. Acta">
        <title>cDNAs for the synthesis of cyclic carotenoids in petals of Gentiana lutea and their regulation during flower development.</title>
        <authorList>
            <person name="Zhu C."/>
            <person name="Yamamura S."/>
            <person name="Nishihara M."/>
            <person name="Koiwa H."/>
            <person name="Sandmann G."/>
        </authorList>
    </citation>
    <scope>NUCLEOTIDE SEQUENCE [MRNA]</scope>
    <scope>FUNCTION</scope>
    <scope>DEVELOPMENTAL STAGE</scope>
</reference>
<evidence type="ECO:0000250" key="1">
    <source>
        <dbReference type="UniProtKB" id="Q9SZZ8"/>
    </source>
</evidence>
<evidence type="ECO:0000255" key="2"/>
<evidence type="ECO:0000269" key="3">
    <source>
    </source>
</evidence>
<evidence type="ECO:0000305" key="4"/>
<evidence type="ECO:0000305" key="5">
    <source>
    </source>
</evidence>
<dbReference type="EC" id="1.14.15.24" evidence="1"/>
<dbReference type="EMBL" id="AB027187">
    <property type="protein sequence ID" value="BAE92729.1"/>
    <property type="molecule type" value="mRNA"/>
</dbReference>
<dbReference type="EMBL" id="EF203255">
    <property type="protein sequence ID" value="ACF21782.1"/>
    <property type="molecule type" value="mRNA"/>
</dbReference>
<dbReference type="KEGG" id="ag:ACF21782"/>
<dbReference type="BRENDA" id="1.14.15.24">
    <property type="organism ID" value="8915"/>
</dbReference>
<dbReference type="GO" id="GO:0031969">
    <property type="term" value="C:chloroplast membrane"/>
    <property type="evidence" value="ECO:0007669"/>
    <property type="project" value="UniProtKB-SubCell"/>
</dbReference>
<dbReference type="GO" id="GO:0010291">
    <property type="term" value="F:beta-carotene 3-hydroxylase activity"/>
    <property type="evidence" value="ECO:0007669"/>
    <property type="project" value="UniProtKB-EC"/>
</dbReference>
<dbReference type="GO" id="GO:0016787">
    <property type="term" value="F:hydrolase activity"/>
    <property type="evidence" value="ECO:0007669"/>
    <property type="project" value="UniProtKB-KW"/>
</dbReference>
<dbReference type="GO" id="GO:0046872">
    <property type="term" value="F:metal ion binding"/>
    <property type="evidence" value="ECO:0007669"/>
    <property type="project" value="UniProtKB-KW"/>
</dbReference>
<dbReference type="GO" id="GO:0016119">
    <property type="term" value="P:carotene metabolic process"/>
    <property type="evidence" value="ECO:0007669"/>
    <property type="project" value="TreeGrafter"/>
</dbReference>
<dbReference type="GO" id="GO:0016123">
    <property type="term" value="P:xanthophyll biosynthetic process"/>
    <property type="evidence" value="ECO:0007669"/>
    <property type="project" value="TreeGrafter"/>
</dbReference>
<dbReference type="InterPro" id="IPR045019">
    <property type="entry name" value="BETA-OHASE-like"/>
</dbReference>
<dbReference type="PANTHER" id="PTHR31899">
    <property type="entry name" value="BETA-CAROTENE 3-HYDROXYLASE 1, CHLOROPLASTIC"/>
    <property type="match status" value="1"/>
</dbReference>
<dbReference type="PANTHER" id="PTHR31899:SF9">
    <property type="entry name" value="BETA-CAROTENE 3-HYDROXYLASE 1, CHLOROPLASTIC"/>
    <property type="match status" value="1"/>
</dbReference>
<keyword id="KW-0125">Carotenoid biosynthesis</keyword>
<keyword id="KW-0150">Chloroplast</keyword>
<keyword id="KW-0378">Hydrolase</keyword>
<keyword id="KW-0408">Iron</keyword>
<keyword id="KW-0472">Membrane</keyword>
<keyword id="KW-0479">Metal-binding</keyword>
<keyword id="KW-0520">NAD</keyword>
<keyword id="KW-0560">Oxidoreductase</keyword>
<keyword id="KW-0934">Plastid</keyword>
<keyword id="KW-0809">Transit peptide</keyword>
<keyword id="KW-0812">Transmembrane</keyword>
<keyword id="KW-1133">Transmembrane helix</keyword>
<gene>
    <name type="primary">BHY</name>
</gene>
<proteinExistence type="evidence at transcript level"/>